<comment type="function">
    <text evidence="3 4">Conjugation of reduced glutathione to a wide number of exogenous and endogenous hydrophobic electrophiles.</text>
</comment>
<comment type="catalytic activity">
    <reaction evidence="3 4 5">
        <text>RX + glutathione = an S-substituted glutathione + a halide anion + H(+)</text>
        <dbReference type="Rhea" id="RHEA:16437"/>
        <dbReference type="ChEBI" id="CHEBI:15378"/>
        <dbReference type="ChEBI" id="CHEBI:16042"/>
        <dbReference type="ChEBI" id="CHEBI:17792"/>
        <dbReference type="ChEBI" id="CHEBI:57925"/>
        <dbReference type="ChEBI" id="CHEBI:90779"/>
        <dbReference type="EC" id="2.5.1.18"/>
    </reaction>
    <physiologicalReaction direction="left-to-right" evidence="9">
        <dbReference type="Rhea" id="RHEA:16438"/>
    </physiologicalReaction>
</comment>
<comment type="activity regulation">
    <text evidence="3 4">In vitro, can be activated by reagents that attack Cys-50 sulfhydryl, such as N-ethylmaleimide and via nitration of Tyr-93 by peroxynitrite.</text>
</comment>
<comment type="subunit">
    <text evidence="5">Homotrimer; The trimer binds only one molecule of glutathione.</text>
</comment>
<comment type="subcellular location">
    <subcellularLocation>
        <location evidence="7">Endoplasmic reticulum membrane</location>
        <topology evidence="2">Multi-pass membrane protein</topology>
    </subcellularLocation>
    <subcellularLocation>
        <location evidence="7">Mitochondrion outer membrane</location>
    </subcellularLocation>
</comment>
<comment type="tissue specificity">
    <text>Highest in the liver, followed by kidney and testis and much lower in seminal vesicles, spleen, lung and brain.</text>
</comment>
<comment type="PTM">
    <text evidence="4">In vitro, peroxynitrite induces nitration at Tyr-93 which activates the enzyme.</text>
</comment>
<comment type="similarity">
    <text evidence="8">Belongs to the MAPEG family.</text>
</comment>
<evidence type="ECO:0000250" key="1">
    <source>
        <dbReference type="UniProtKB" id="Q91VS7"/>
    </source>
</evidence>
<evidence type="ECO:0000255" key="2"/>
<evidence type="ECO:0000269" key="3">
    <source>
    </source>
</evidence>
<evidence type="ECO:0000269" key="4">
    <source>
    </source>
</evidence>
<evidence type="ECO:0000269" key="5">
    <source>
    </source>
</evidence>
<evidence type="ECO:0000269" key="6">
    <source>
    </source>
</evidence>
<evidence type="ECO:0000269" key="7">
    <source>
    </source>
</evidence>
<evidence type="ECO:0000305" key="8"/>
<evidence type="ECO:0000305" key="9">
    <source>
    </source>
</evidence>
<evidence type="ECO:0007829" key="10">
    <source>
        <dbReference type="PDB" id="2H8A"/>
    </source>
</evidence>
<dbReference type="EC" id="2.5.1.18" evidence="3 4 5"/>
<dbReference type="EMBL" id="J03752">
    <property type="protein sequence ID" value="AAA41281.1"/>
    <property type="molecule type" value="mRNA"/>
</dbReference>
<dbReference type="EMBL" id="BC063150">
    <property type="protein sequence ID" value="AAH63150.1"/>
    <property type="molecule type" value="mRNA"/>
</dbReference>
<dbReference type="PIR" id="A28083">
    <property type="entry name" value="A28083"/>
</dbReference>
<dbReference type="RefSeq" id="NP_599176.1">
    <property type="nucleotide sequence ID" value="NM_134349.3"/>
</dbReference>
<dbReference type="PDB" id="2H8A">
    <property type="method" value="EM"/>
    <property type="resolution" value="3.20 A"/>
    <property type="chains" value="A=2-155"/>
</dbReference>
<dbReference type="PDB" id="5I9K">
    <property type="method" value="EM"/>
    <property type="resolution" value="3.50 A"/>
    <property type="chains" value="A=1-155"/>
</dbReference>
<dbReference type="PDB" id="5IA9">
    <property type="method" value="EM"/>
    <property type="resolution" value="3.50 A"/>
    <property type="chains" value="A=1-155"/>
</dbReference>
<dbReference type="PDBsum" id="2H8A"/>
<dbReference type="PDBsum" id="5I9K"/>
<dbReference type="PDBsum" id="5IA9"/>
<dbReference type="EMDB" id="EMD-8076"/>
<dbReference type="EMDB" id="EMD-8084"/>
<dbReference type="SMR" id="P08011"/>
<dbReference type="FunCoup" id="P08011">
    <property type="interactions" value="379"/>
</dbReference>
<dbReference type="IntAct" id="P08011">
    <property type="interactions" value="1"/>
</dbReference>
<dbReference type="STRING" id="10116.ENSRNOP00000010579"/>
<dbReference type="ChEMBL" id="CHEMBL4630811"/>
<dbReference type="iPTMnet" id="P08011"/>
<dbReference type="PhosphoSitePlus" id="P08011"/>
<dbReference type="jPOST" id="P08011"/>
<dbReference type="PaxDb" id="10116-ENSRNOP00000010579"/>
<dbReference type="Ensembl" id="ENSRNOT00000010579.8">
    <property type="protein sequence ID" value="ENSRNOP00000010579.4"/>
    <property type="gene ID" value="ENSRNOG00000007743.8"/>
</dbReference>
<dbReference type="GeneID" id="171341"/>
<dbReference type="KEGG" id="rno:171341"/>
<dbReference type="UCSC" id="RGD:70927">
    <property type="organism name" value="rat"/>
</dbReference>
<dbReference type="AGR" id="RGD:70927"/>
<dbReference type="CTD" id="4257"/>
<dbReference type="RGD" id="70927">
    <property type="gene designation" value="Mgst1"/>
</dbReference>
<dbReference type="eggNOG" id="ENOG502S0BD">
    <property type="taxonomic scope" value="Eukaryota"/>
</dbReference>
<dbReference type="GeneTree" id="ENSGT00390000011980"/>
<dbReference type="HOGENOM" id="CLU_105467_1_0_1"/>
<dbReference type="InParanoid" id="P08011"/>
<dbReference type="OMA" id="RAQRCHH"/>
<dbReference type="OrthoDB" id="15755at9989"/>
<dbReference type="PhylomeDB" id="P08011"/>
<dbReference type="TreeFam" id="TF105327"/>
<dbReference type="BRENDA" id="2.5.1.18">
    <property type="organism ID" value="5301"/>
</dbReference>
<dbReference type="Reactome" id="R-RNO-156590">
    <property type="pathway name" value="Glutathione conjugation"/>
</dbReference>
<dbReference type="Reactome" id="R-RNO-5423646">
    <property type="pathway name" value="Aflatoxin activation and detoxification"/>
</dbReference>
<dbReference type="Reactome" id="R-RNO-6798695">
    <property type="pathway name" value="Neutrophil degranulation"/>
</dbReference>
<dbReference type="SABIO-RK" id="P08011"/>
<dbReference type="EvolutionaryTrace" id="P08011"/>
<dbReference type="PRO" id="PR:P08011"/>
<dbReference type="Proteomes" id="UP000002494">
    <property type="component" value="Chromosome 4"/>
</dbReference>
<dbReference type="Bgee" id="ENSRNOG00000007743">
    <property type="expression patterns" value="Expressed in liver and 19 other cell types or tissues"/>
</dbReference>
<dbReference type="ExpressionAtlas" id="P08011">
    <property type="expression patterns" value="baseline and differential"/>
</dbReference>
<dbReference type="GO" id="GO:0045177">
    <property type="term" value="C:apical part of cell"/>
    <property type="evidence" value="ECO:0000314"/>
    <property type="project" value="RGD"/>
</dbReference>
<dbReference type="GO" id="GO:0005783">
    <property type="term" value="C:endoplasmic reticulum"/>
    <property type="evidence" value="ECO:0000314"/>
    <property type="project" value="HGNC-UCL"/>
</dbReference>
<dbReference type="GO" id="GO:0005789">
    <property type="term" value="C:endoplasmic reticulum membrane"/>
    <property type="evidence" value="ECO:0000314"/>
    <property type="project" value="FlyBase"/>
</dbReference>
<dbReference type="GO" id="GO:0016020">
    <property type="term" value="C:membrane"/>
    <property type="evidence" value="ECO:0000314"/>
    <property type="project" value="UniProtKB"/>
</dbReference>
<dbReference type="GO" id="GO:0005741">
    <property type="term" value="C:mitochondrial outer membrane"/>
    <property type="evidence" value="ECO:0000314"/>
    <property type="project" value="FlyBase"/>
</dbReference>
<dbReference type="GO" id="GO:0005739">
    <property type="term" value="C:mitochondrion"/>
    <property type="evidence" value="ECO:0000314"/>
    <property type="project" value="FlyBase"/>
</dbReference>
<dbReference type="GO" id="GO:0005778">
    <property type="term" value="C:peroxisomal membrane"/>
    <property type="evidence" value="ECO:0000314"/>
    <property type="project" value="RGD"/>
</dbReference>
<dbReference type="GO" id="GO:0043295">
    <property type="term" value="F:glutathione binding"/>
    <property type="evidence" value="ECO:0000314"/>
    <property type="project" value="UniProtKB"/>
</dbReference>
<dbReference type="GO" id="GO:0004602">
    <property type="term" value="F:glutathione peroxidase activity"/>
    <property type="evidence" value="ECO:0000266"/>
    <property type="project" value="RGD"/>
</dbReference>
<dbReference type="GO" id="GO:0004364">
    <property type="term" value="F:glutathione transferase activity"/>
    <property type="evidence" value="ECO:0000314"/>
    <property type="project" value="RGD"/>
</dbReference>
<dbReference type="GO" id="GO:0042802">
    <property type="term" value="F:identical protein binding"/>
    <property type="evidence" value="ECO:0000314"/>
    <property type="project" value="RGD"/>
</dbReference>
<dbReference type="GO" id="GO:0071449">
    <property type="term" value="P:cellular response to lipid hydroperoxide"/>
    <property type="evidence" value="ECO:0000266"/>
    <property type="project" value="RGD"/>
</dbReference>
<dbReference type="GO" id="GO:0006749">
    <property type="term" value="P:glutathione metabolic process"/>
    <property type="evidence" value="ECO:0000266"/>
    <property type="project" value="RGD"/>
</dbReference>
<dbReference type="GO" id="GO:0034635">
    <property type="term" value="P:glutathione transport"/>
    <property type="evidence" value="ECO:0000266"/>
    <property type="project" value="RGD"/>
</dbReference>
<dbReference type="GO" id="GO:0033327">
    <property type="term" value="P:Leydig cell differentiation"/>
    <property type="evidence" value="ECO:0000270"/>
    <property type="project" value="RGD"/>
</dbReference>
<dbReference type="GO" id="GO:0032496">
    <property type="term" value="P:response to lipopolysaccharide"/>
    <property type="evidence" value="ECO:0000314"/>
    <property type="project" value="RGD"/>
</dbReference>
<dbReference type="GO" id="GO:0009410">
    <property type="term" value="P:response to xenobiotic stimulus"/>
    <property type="evidence" value="ECO:0000314"/>
    <property type="project" value="RGD"/>
</dbReference>
<dbReference type="FunFam" id="1.20.120.550:FF:000002">
    <property type="entry name" value="Microsomal glutathione S-transferase 1"/>
    <property type="match status" value="1"/>
</dbReference>
<dbReference type="Gene3D" id="1.20.120.550">
    <property type="entry name" value="Membrane associated eicosanoid/glutathione metabolism-like domain"/>
    <property type="match status" value="1"/>
</dbReference>
<dbReference type="InterPro" id="IPR023352">
    <property type="entry name" value="MAPEG-like_dom_sf"/>
</dbReference>
<dbReference type="InterPro" id="IPR001129">
    <property type="entry name" value="Membr-assoc_MAPEG"/>
</dbReference>
<dbReference type="InterPro" id="IPR040162">
    <property type="entry name" value="MGST1-like"/>
</dbReference>
<dbReference type="PANTHER" id="PTHR10689">
    <property type="entry name" value="MICROSOMAL GLUTATHIONE S-TRANSFERASE 1"/>
    <property type="match status" value="1"/>
</dbReference>
<dbReference type="PANTHER" id="PTHR10689:SF6">
    <property type="entry name" value="MICROSOMAL GLUTATHIONE S-TRANSFERASE 1"/>
    <property type="match status" value="1"/>
</dbReference>
<dbReference type="Pfam" id="PF01124">
    <property type="entry name" value="MAPEG"/>
    <property type="match status" value="1"/>
</dbReference>
<dbReference type="SUPFAM" id="SSF161084">
    <property type="entry name" value="MAPEG domain-like"/>
    <property type="match status" value="1"/>
</dbReference>
<reference key="1">
    <citation type="journal article" date="1988" name="J. Biol. Chem.">
        <title>Gene expression of rat and human microsomal glutathione S-transferases.</title>
        <authorList>
            <person name="Dejong J.L."/>
            <person name="Morgenstern R."/>
            <person name="Joernvall H."/>
            <person name="Depierre J.W."/>
            <person name="Tu C.-P.D."/>
        </authorList>
    </citation>
    <scope>NUCLEOTIDE SEQUENCE [MRNA]</scope>
    <source>
        <strain>Sprague-Dawley</strain>
        <tissue>Liver</tissue>
    </source>
</reference>
<reference key="2">
    <citation type="journal article" date="2004" name="Genome Res.">
        <title>The status, quality, and expansion of the NIH full-length cDNA project: the Mammalian Gene Collection (MGC).</title>
        <authorList>
            <consortium name="The MGC Project Team"/>
        </authorList>
    </citation>
    <scope>NUCLEOTIDE SEQUENCE [LARGE SCALE MRNA]</scope>
    <source>
        <tissue>Pituitary</tissue>
    </source>
</reference>
<reference key="3">
    <citation type="journal article" date="1985" name="J. Biol. Chem.">
        <title>Microsomal glutathione transferase. Primary structure.</title>
        <authorList>
            <person name="Morgenstern R."/>
            <person name="Depierre J.W."/>
            <person name="Joernvall H."/>
        </authorList>
    </citation>
    <scope>PROTEIN SEQUENCE OF 2-155</scope>
</reference>
<reference key="4">
    <citation type="journal article" date="1984" name="Biochem. Pharmacol.">
        <title>The distribution of microsomal glutathione transferase among different organelles, different organs, and different organisms.</title>
        <authorList>
            <person name="Morgenstern R."/>
            <person name="Lundqvist G."/>
            <person name="Andersson G."/>
            <person name="Balk L."/>
            <person name="Depierre J.W."/>
        </authorList>
    </citation>
    <scope>SUBCELLULAR LOCATION</scope>
    <source>
        <strain>Sprague-Dawley</strain>
        <tissue>Liver</tissue>
    </source>
</reference>
<reference key="5">
    <citation type="journal article" date="2000" name="Biochemistry">
        <title>Reactivity of cysteine-49 and its influence on the activation of microsomal glutathione transferase 1: evidence for subunit interaction.</title>
        <authorList>
            <person name="Svensson R."/>
            <person name="Rinaldi R."/>
            <person name="Swedmark S."/>
            <person name="Morgenstern R."/>
        </authorList>
    </citation>
    <scope>FUNCTION</scope>
    <scope>CATALYTIC ACTIVITY</scope>
    <scope>ROLE OF CYS-50 IN ACTIVITY REGULATION</scope>
</reference>
<reference key="6">
    <citation type="journal article" date="2006" name="J. Biol. Chem.">
        <title>Nitration of tyrosine 92 mediates the activation of rat microsomal glutathione s-transferase by peroxynitrite.</title>
        <authorList>
            <person name="Ji Y."/>
            <person name="Neverova I."/>
            <person name="Van Eyk J.E."/>
            <person name="Bennett B.M."/>
        </authorList>
    </citation>
    <scope>FUNCTION</scope>
    <scope>CATALYTIC ACTIVITY</scope>
    <scope>NITRATION AT TYR-93</scope>
    <scope>ACTIVITY REGULATION</scope>
</reference>
<reference key="7">
    <citation type="journal article" date="2006" name="J. Mol. Biol.">
        <title>Structural basis for detoxification and oxidative stress protection in membranes.</title>
        <authorList>
            <person name="Holm P.J."/>
            <person name="Bhakat P."/>
            <person name="Jegerschold C."/>
            <person name="Gyobu N."/>
            <person name="Mitsuoka K."/>
            <person name="Fujiyoshi Y."/>
            <person name="Morgenstern R."/>
            <person name="Hebert H."/>
        </authorList>
    </citation>
    <scope>X-RAY CRYSTALLOGRAPHY (3.2 ANGSTROMS) OF 2-154 IN COMPLEX WITH GLUTATHIONE</scope>
    <scope>FUNCTION</scope>
    <scope>CATALYTIC ACTIVITY</scope>
    <scope>SUBUNIT</scope>
    <scope>SUBCELLULAR LOCATION</scope>
    <scope>TOPOLOGY</scope>
    <scope>MUTAGENESIS OF HIS-76 AND GLU-81</scope>
    <scope>GLUTATHIONE BINDING SITES</scope>
</reference>
<protein>
    <recommendedName>
        <fullName>Microsomal glutathione S-transferase 1</fullName>
        <shortName>Microsomal GST-1</shortName>
        <ecNumber evidence="3 4 5">2.5.1.18</ecNumber>
    </recommendedName>
    <alternativeName>
        <fullName>Microsomal GST-I</fullName>
    </alternativeName>
</protein>
<gene>
    <name type="primary">Mgst1</name>
    <name type="synonym">Gst12</name>
</gene>
<accession>P08011</accession>
<proteinExistence type="evidence at protein level"/>
<sequence length="155" mass="17472">MADLKQLMDNEVLMAFTSYATIILAKMMFLSSATAFQRLTNKVFANPEDCAGFGKGENAKKFLRTDEKVERVRRAHLNDLENIVPFLGIGLLYSLSGPDLSTALIHFRIFVGARIYHTIAYLTPLPQPNRGLAFFVGYGVTLSMAYRLLRSRLYL</sequence>
<name>MGST1_RAT</name>
<feature type="initiator methionine" description="Removed" evidence="6">
    <location>
        <position position="1"/>
    </location>
</feature>
<feature type="chain" id="PRO_0000217739" description="Microsomal glutathione S-transferase 1">
    <location>
        <begin position="2"/>
        <end position="155"/>
    </location>
</feature>
<feature type="topological domain" description="Lumenal" evidence="5">
    <location>
        <begin position="3"/>
        <end position="9"/>
    </location>
</feature>
<feature type="transmembrane region" description="Helical" evidence="2">
    <location>
        <begin position="10"/>
        <end position="33"/>
    </location>
</feature>
<feature type="topological domain" description="Cytoplasmic" evidence="5">
    <location>
        <begin position="34"/>
        <end position="62"/>
    </location>
</feature>
<feature type="transmembrane region" description="Helical" evidence="2">
    <location>
        <begin position="63"/>
        <end position="96"/>
    </location>
</feature>
<feature type="topological domain" description="Lumenal" evidence="5">
    <location>
        <begin position="97"/>
        <end position="99"/>
    </location>
</feature>
<feature type="transmembrane region" description="Helical" evidence="2">
    <location>
        <begin position="100"/>
        <end position="123"/>
    </location>
</feature>
<feature type="topological domain" description="Cytoplasmic" evidence="5">
    <location>
        <begin position="124"/>
        <end position="128"/>
    </location>
</feature>
<feature type="transmembrane region" description="Helical" evidence="2">
    <location>
        <begin position="129"/>
        <end position="148"/>
    </location>
</feature>
<feature type="topological domain" description="Lumenal" evidence="5">
    <location>
        <begin position="149"/>
        <end position="155"/>
    </location>
</feature>
<feature type="binding site" evidence="5">
    <location>
        <position position="38"/>
    </location>
    <ligand>
        <name>glutathione</name>
        <dbReference type="ChEBI" id="CHEBI:57925"/>
    </ligand>
</feature>
<feature type="binding site" evidence="5">
    <location>
        <position position="73"/>
    </location>
    <ligand>
        <name>glutathione</name>
        <dbReference type="ChEBI" id="CHEBI:57925"/>
    </ligand>
</feature>
<feature type="binding site" evidence="5">
    <location>
        <position position="74"/>
    </location>
    <ligand>
        <name>glutathione</name>
        <dbReference type="ChEBI" id="CHEBI:57925"/>
    </ligand>
</feature>
<feature type="binding site" evidence="5">
    <location>
        <position position="76"/>
    </location>
    <ligand>
        <name>glutathione</name>
        <dbReference type="ChEBI" id="CHEBI:57925"/>
    </ligand>
</feature>
<feature type="binding site" evidence="5">
    <location>
        <position position="81"/>
    </location>
    <ligand>
        <name>glutathione</name>
        <dbReference type="ChEBI" id="CHEBI:57925"/>
    </ligand>
</feature>
<feature type="binding site" evidence="5">
    <location>
        <position position="121"/>
    </location>
    <ligand>
        <name>glutathione</name>
        <dbReference type="ChEBI" id="CHEBI:57925"/>
    </ligand>
</feature>
<feature type="site" description="Activates the enzyme when modified in vitro" evidence="3">
    <location>
        <position position="50"/>
    </location>
</feature>
<feature type="modified residue" description="N6-acetyllysine" evidence="1">
    <location>
        <position position="42"/>
    </location>
</feature>
<feature type="modified residue" description="N6-acetyllysine" evidence="1">
    <location>
        <position position="55"/>
    </location>
</feature>
<feature type="modified residue" description="N6-acetyllysine" evidence="1">
    <location>
        <position position="60"/>
    </location>
</feature>
<feature type="modified residue" description="3'-nitrotyrosine; in vitro" evidence="4">
    <location>
        <position position="93"/>
    </location>
</feature>
<feature type="mutagenesis site" description="Decreased enzyme activity." evidence="5">
    <original>H</original>
    <variation>Q</variation>
    <location>
        <position position="76"/>
    </location>
</feature>
<feature type="mutagenesis site" description="Loss of enzyme activity." evidence="5">
    <original>E</original>
    <variation>Q</variation>
    <location>
        <position position="81"/>
    </location>
</feature>
<feature type="sequence conflict" description="In Ref. 3; AA sequence." evidence="8" ref="3">
    <original>M</original>
    <variation>V</variation>
    <location>
        <position position="27"/>
    </location>
</feature>
<feature type="sequence conflict" description="In Ref. 3; AA sequence." evidence="8" ref="3">
    <original>K</original>
    <variation>G</variation>
    <location>
        <position position="55"/>
    </location>
</feature>
<feature type="sequence conflict" description="In Ref. 3; AA sequence." evidence="8" ref="3">
    <original>K</original>
    <variation>T</variation>
    <location>
        <position position="68"/>
    </location>
</feature>
<feature type="sequence conflict" description="In Ref. 3; AA sequence." evidence="8" ref="3">
    <original>G</original>
    <variation>A</variation>
    <location>
        <position position="97"/>
    </location>
</feature>
<feature type="sequence conflict" description="In Ref. 3; AA sequence." evidence="8" ref="3">
    <original>S</original>
    <variation>P</variation>
    <location>
        <position position="101"/>
    </location>
</feature>
<feature type="sequence conflict" description="In Ref. 3; AA sequence." evidence="8" ref="3">
    <original>F</original>
    <variation>K</variation>
    <location>
        <position position="134"/>
    </location>
</feature>
<feature type="sequence conflict" description="In Ref. 3; AA sequence." evidence="8" ref="3">
    <original>T</original>
    <variation>D</variation>
    <location>
        <position position="141"/>
    </location>
</feature>
<feature type="helix" evidence="10">
    <location>
        <begin position="11"/>
        <end position="24"/>
    </location>
</feature>
<feature type="helix" evidence="10">
    <location>
        <begin position="27"/>
        <end position="30"/>
    </location>
</feature>
<feature type="helix" evidence="10">
    <location>
        <begin position="31"/>
        <end position="33"/>
    </location>
</feature>
<feature type="helix" evidence="10">
    <location>
        <begin position="64"/>
        <end position="81"/>
    </location>
</feature>
<feature type="helix" evidence="10">
    <location>
        <begin position="84"/>
        <end position="92"/>
    </location>
</feature>
<feature type="turn" evidence="10">
    <location>
        <begin position="93"/>
        <end position="95"/>
    </location>
</feature>
<feature type="helix" evidence="10">
    <location>
        <begin position="103"/>
        <end position="122"/>
    </location>
</feature>
<feature type="helix" evidence="10">
    <location>
        <begin position="127"/>
        <end position="137"/>
    </location>
</feature>
<feature type="helix" evidence="10">
    <location>
        <begin position="139"/>
        <end position="146"/>
    </location>
</feature>
<keyword id="KW-0002">3D-structure</keyword>
<keyword id="KW-0007">Acetylation</keyword>
<keyword id="KW-0903">Direct protein sequencing</keyword>
<keyword id="KW-0256">Endoplasmic reticulum</keyword>
<keyword id="KW-0472">Membrane</keyword>
<keyword id="KW-0496">Mitochondrion</keyword>
<keyword id="KW-1000">Mitochondrion outer membrane</keyword>
<keyword id="KW-0944">Nitration</keyword>
<keyword id="KW-1185">Reference proteome</keyword>
<keyword id="KW-0808">Transferase</keyword>
<keyword id="KW-0812">Transmembrane</keyword>
<keyword id="KW-1133">Transmembrane helix</keyword>
<organism>
    <name type="scientific">Rattus norvegicus</name>
    <name type="common">Rat</name>
    <dbReference type="NCBI Taxonomy" id="10116"/>
    <lineage>
        <taxon>Eukaryota</taxon>
        <taxon>Metazoa</taxon>
        <taxon>Chordata</taxon>
        <taxon>Craniata</taxon>
        <taxon>Vertebrata</taxon>
        <taxon>Euteleostomi</taxon>
        <taxon>Mammalia</taxon>
        <taxon>Eutheria</taxon>
        <taxon>Euarchontoglires</taxon>
        <taxon>Glires</taxon>
        <taxon>Rodentia</taxon>
        <taxon>Myomorpha</taxon>
        <taxon>Muroidea</taxon>
        <taxon>Muridae</taxon>
        <taxon>Murinae</taxon>
        <taxon>Rattus</taxon>
    </lineage>
</organism>